<keyword id="KW-0150">Chloroplast</keyword>
<keyword id="KW-0472">Membrane</keyword>
<keyword id="KW-0602">Photosynthesis</keyword>
<keyword id="KW-0604">Photosystem II</keyword>
<keyword id="KW-0934">Plastid</keyword>
<keyword id="KW-1185">Reference proteome</keyword>
<keyword id="KW-0793">Thylakoid</keyword>
<keyword id="KW-0812">Transmembrane</keyword>
<keyword id="KW-1133">Transmembrane helix</keyword>
<evidence type="ECO:0000255" key="1">
    <source>
        <dbReference type="HAMAP-Rule" id="MF_00808"/>
    </source>
</evidence>
<dbReference type="EMBL" id="DQ345959">
    <property type="protein sequence ID" value="ABC73654.1"/>
    <property type="molecule type" value="Genomic_DNA"/>
</dbReference>
<dbReference type="RefSeq" id="YP_538963.1">
    <property type="nucleotide sequence ID" value="NC_007944.1"/>
</dbReference>
<dbReference type="SMR" id="Q2L931"/>
<dbReference type="GeneID" id="3989131"/>
<dbReference type="KEGG" id="ghi:3989131"/>
<dbReference type="OrthoDB" id="40804at41938"/>
<dbReference type="Proteomes" id="UP000189702">
    <property type="component" value="Chloroplast Pltd"/>
</dbReference>
<dbReference type="GO" id="GO:0009535">
    <property type="term" value="C:chloroplast thylakoid membrane"/>
    <property type="evidence" value="ECO:0007669"/>
    <property type="project" value="UniProtKB-SubCell"/>
</dbReference>
<dbReference type="GO" id="GO:0009539">
    <property type="term" value="C:photosystem II reaction center"/>
    <property type="evidence" value="ECO:0007669"/>
    <property type="project" value="InterPro"/>
</dbReference>
<dbReference type="GO" id="GO:0015979">
    <property type="term" value="P:photosynthesis"/>
    <property type="evidence" value="ECO:0007669"/>
    <property type="project" value="UniProtKB-UniRule"/>
</dbReference>
<dbReference type="HAMAP" id="MF_00808">
    <property type="entry name" value="PSII_PsbT"/>
    <property type="match status" value="1"/>
</dbReference>
<dbReference type="InterPro" id="IPR001743">
    <property type="entry name" value="PSII_PsbT"/>
</dbReference>
<dbReference type="InterPro" id="IPR037268">
    <property type="entry name" value="PSII_PsbT_sf"/>
</dbReference>
<dbReference type="PANTHER" id="PTHR36411">
    <property type="match status" value="1"/>
</dbReference>
<dbReference type="PANTHER" id="PTHR36411:SF2">
    <property type="entry name" value="PHOTOSYSTEM II REACTION CENTER PROTEIN T"/>
    <property type="match status" value="1"/>
</dbReference>
<dbReference type="Pfam" id="PF01405">
    <property type="entry name" value="PsbT"/>
    <property type="match status" value="1"/>
</dbReference>
<dbReference type="SUPFAM" id="SSF161029">
    <property type="entry name" value="Photosystem II reaction center protein T, PsbT"/>
    <property type="match status" value="1"/>
</dbReference>
<protein>
    <recommendedName>
        <fullName evidence="1">Photosystem II reaction center protein T</fullName>
        <shortName evidence="1">PSII-T</shortName>
    </recommendedName>
</protein>
<sequence length="35" mass="4107">MEALVYTFLLVSTLGIIFFAIFFREPPKILTKKMK</sequence>
<name>PSBT_GOSHI</name>
<geneLocation type="chloroplast"/>
<organism>
    <name type="scientific">Gossypium hirsutum</name>
    <name type="common">Upland cotton</name>
    <name type="synonym">Gossypium mexicanum</name>
    <dbReference type="NCBI Taxonomy" id="3635"/>
    <lineage>
        <taxon>Eukaryota</taxon>
        <taxon>Viridiplantae</taxon>
        <taxon>Streptophyta</taxon>
        <taxon>Embryophyta</taxon>
        <taxon>Tracheophyta</taxon>
        <taxon>Spermatophyta</taxon>
        <taxon>Magnoliopsida</taxon>
        <taxon>eudicotyledons</taxon>
        <taxon>Gunneridae</taxon>
        <taxon>Pentapetalae</taxon>
        <taxon>rosids</taxon>
        <taxon>malvids</taxon>
        <taxon>Malvales</taxon>
        <taxon>Malvaceae</taxon>
        <taxon>Malvoideae</taxon>
        <taxon>Gossypium</taxon>
    </lineage>
</organism>
<gene>
    <name evidence="1" type="primary">psbT</name>
</gene>
<proteinExistence type="inferred from homology"/>
<reference key="1">
    <citation type="journal article" date="2006" name="BMC Genomics">
        <title>The complete chloroplast genome sequence of Gossypium hirsutum: organization and phylogenetic relationships to other angiosperms.</title>
        <authorList>
            <person name="Lee S.-B."/>
            <person name="Kaittanis C."/>
            <person name="Jansen R.K."/>
            <person name="Hostetler J.B."/>
            <person name="Tallon L.J."/>
            <person name="Town C.D."/>
            <person name="Daniell H."/>
        </authorList>
    </citation>
    <scope>NUCLEOTIDE SEQUENCE [LARGE SCALE GENOMIC DNA]</scope>
    <source>
        <strain>cv. Coker 310FR</strain>
    </source>
</reference>
<feature type="chain" id="PRO_0000276297" description="Photosystem II reaction center protein T">
    <location>
        <begin position="1"/>
        <end position="35"/>
    </location>
</feature>
<feature type="transmembrane region" description="Helical" evidence="1">
    <location>
        <begin position="3"/>
        <end position="23"/>
    </location>
</feature>
<accession>Q2L931</accession>
<comment type="function">
    <text evidence="1">Found at the monomer-monomer interface of the photosystem II (PS II) dimer, plays a role in assembly and dimerization of PSII. PSII is a light-driven water plastoquinone oxidoreductase, using light energy to abstract electrons from H(2)O, generating a proton gradient subsequently used for ATP formation.</text>
</comment>
<comment type="subunit">
    <text evidence="1">PSII is composed of 1 copy each of membrane proteins PsbA, PsbB, PsbC, PsbD, PsbE, PsbF, PsbH, PsbI, PsbJ, PsbK, PsbL, PsbM, PsbT, PsbY, PsbZ, Psb30/Ycf12, at least 3 peripheral proteins of the oxygen-evolving complex and a large number of cofactors. It forms dimeric complexes.</text>
</comment>
<comment type="subcellular location">
    <subcellularLocation>
        <location evidence="1">Plastid</location>
        <location evidence="1">Chloroplast thylakoid membrane</location>
        <topology evidence="1">Single-pass membrane protein</topology>
    </subcellularLocation>
</comment>
<comment type="similarity">
    <text evidence="1">Belongs to the PsbT family.</text>
</comment>